<sequence>MRSYGKEKKLVFPYVFIACCFFLAIFGFCFFNLFSQGISFSEIPTTRRSVNDETDSLDHGSSVSNIPFHGLSWNPRVFYLPNFATKQQCEAVIDMAKPKLKPSTLALRKGETAETTQNYRSLHQHTDEDESGVLAAIEEKIALATRFPKDYYESFNILRYQLGQKYDSHYDAFHSAEYGPLISQRVVTFLLFLSSVEEGGETMFPFENGRNMNGRYDYEKCVGLKVKPRQGDAIFFYNLFPNGTIDQTSLHGSCPVIKGEKWVATKWIRDQTYD</sequence>
<evidence type="ECO:0000250" key="1">
    <source>
        <dbReference type="UniProtKB" id="Q86KR9"/>
    </source>
</evidence>
<evidence type="ECO:0000250" key="2">
    <source>
        <dbReference type="UniProtKB" id="Q9ZW86"/>
    </source>
</evidence>
<evidence type="ECO:0000255" key="3"/>
<evidence type="ECO:0000255" key="4">
    <source>
        <dbReference type="PROSITE-ProRule" id="PRU00498"/>
    </source>
</evidence>
<evidence type="ECO:0000255" key="5">
    <source>
        <dbReference type="PROSITE-ProRule" id="PRU00805"/>
    </source>
</evidence>
<evidence type="ECO:0000269" key="6">
    <source>
    </source>
</evidence>
<evidence type="ECO:0000303" key="7">
    <source ref="3"/>
</evidence>
<evidence type="ECO:0000305" key="8"/>
<evidence type="ECO:0000305" key="9">
    <source>
    </source>
</evidence>
<accession>F4ILF8</accession>
<reference key="1">
    <citation type="journal article" date="1999" name="Nature">
        <title>Sequence and analysis of chromosome 2 of the plant Arabidopsis thaliana.</title>
        <authorList>
            <person name="Lin X."/>
            <person name="Kaul S."/>
            <person name="Rounsley S.D."/>
            <person name="Shea T.P."/>
            <person name="Benito M.-I."/>
            <person name="Town C.D."/>
            <person name="Fujii C.Y."/>
            <person name="Mason T.M."/>
            <person name="Bowman C.L."/>
            <person name="Barnstead M.E."/>
            <person name="Feldblyum T.V."/>
            <person name="Buell C.R."/>
            <person name="Ketchum K.A."/>
            <person name="Lee J.J."/>
            <person name="Ronning C.M."/>
            <person name="Koo H.L."/>
            <person name="Moffat K.S."/>
            <person name="Cronin L.A."/>
            <person name="Shen M."/>
            <person name="Pai G."/>
            <person name="Van Aken S."/>
            <person name="Umayam L."/>
            <person name="Tallon L.J."/>
            <person name="Gill J.E."/>
            <person name="Adams M.D."/>
            <person name="Carrera A.J."/>
            <person name="Creasy T.H."/>
            <person name="Goodman H.M."/>
            <person name="Somerville C.R."/>
            <person name="Copenhaver G.P."/>
            <person name="Preuss D."/>
            <person name="Nierman W.C."/>
            <person name="White O."/>
            <person name="Eisen J.A."/>
            <person name="Salzberg S.L."/>
            <person name="Fraser C.M."/>
            <person name="Venter J.C."/>
        </authorList>
    </citation>
    <scope>NUCLEOTIDE SEQUENCE [LARGE SCALE GENOMIC DNA]</scope>
    <source>
        <strain>cv. Columbia</strain>
    </source>
</reference>
<reference key="2">
    <citation type="journal article" date="2017" name="Plant J.">
        <title>Araport11: a complete reannotation of the Arabidopsis thaliana reference genome.</title>
        <authorList>
            <person name="Cheng C.Y."/>
            <person name="Krishnakumar V."/>
            <person name="Chan A.P."/>
            <person name="Thibaud-Nissen F."/>
            <person name="Schobel S."/>
            <person name="Town C.D."/>
        </authorList>
    </citation>
    <scope>GENOME REANNOTATION</scope>
    <source>
        <strain>cv. Columbia</strain>
    </source>
</reference>
<reference key="3">
    <citation type="journal article" date="2007" name="Physiol. Plantarum">
        <title>Arabidopsis prolyl 4-hydroxylases are differentially expressed in response to hypoxia, anoxia and mechanical wounding.</title>
        <authorList>
            <person name="Vlad F."/>
            <person name="Spano T."/>
            <person name="Vlad D."/>
            <person name="Bou Daher F."/>
            <person name="Ouelhadj A."/>
            <person name="Kalaitzis P."/>
        </authorList>
    </citation>
    <scope>GENE FAMILY</scope>
    <scope>NOMENCLATURE</scope>
</reference>
<reference key="4">
    <citation type="journal article" date="2011" name="Science">
        <title>O-glycosylated cell wall proteins are essential in root hair growth.</title>
        <authorList>
            <person name="Velasquez S.M."/>
            <person name="Ricardi M.M."/>
            <person name="Dorosz J.G."/>
            <person name="Fernandez P.V."/>
            <person name="Nadra A.D."/>
            <person name="Pol-Fachin L."/>
            <person name="Egelund J."/>
            <person name="Gille S."/>
            <person name="Harholt J."/>
            <person name="Ciancia M."/>
            <person name="Verli H."/>
            <person name="Pauly M."/>
            <person name="Bacic A."/>
            <person name="Olsen C.E."/>
            <person name="Ulvskov P."/>
            <person name="Petersen B.L."/>
            <person name="Somerville C."/>
            <person name="Iusem N.D."/>
            <person name="Estevez J.M."/>
        </authorList>
    </citation>
    <scope>FUNCTION</scope>
    <scope>SUBCELLULAR LOCATION</scope>
    <scope>TISSUE SPECIFICITY</scope>
    <scope>DISRUPTION PHENOTYPE</scope>
</reference>
<gene>
    <name evidence="7" type="primary">P4H13</name>
    <name type="ordered locus">At2g23096</name>
    <name type="ORF">F21P24</name>
</gene>
<dbReference type="EC" id="1.14.11.2" evidence="8"/>
<dbReference type="EMBL" id="AC004401">
    <property type="status" value="NOT_ANNOTATED_CDS"/>
    <property type="molecule type" value="Genomic_DNA"/>
</dbReference>
<dbReference type="EMBL" id="CP002685">
    <property type="protein sequence ID" value="AEC07409.1"/>
    <property type="molecule type" value="Genomic_DNA"/>
</dbReference>
<dbReference type="RefSeq" id="NP_850038.1">
    <property type="nucleotide sequence ID" value="NM_179707.3"/>
</dbReference>
<dbReference type="SMR" id="F4ILF8"/>
<dbReference type="FunCoup" id="F4ILF8">
    <property type="interactions" value="10"/>
</dbReference>
<dbReference type="STRING" id="3702.F4ILF8"/>
<dbReference type="GlyCosmos" id="F4ILF8">
    <property type="glycosylation" value="1 site, No reported glycans"/>
</dbReference>
<dbReference type="GlyGen" id="F4ILF8">
    <property type="glycosylation" value="1 site"/>
</dbReference>
<dbReference type="PaxDb" id="3702-AT2G23096.1"/>
<dbReference type="EnsemblPlants" id="AT2G23096.1">
    <property type="protein sequence ID" value="AT2G23096.1"/>
    <property type="gene ID" value="AT2G23096"/>
</dbReference>
<dbReference type="GeneID" id="816841"/>
<dbReference type="Gramene" id="AT2G23096.1">
    <property type="protein sequence ID" value="AT2G23096.1"/>
    <property type="gene ID" value="AT2G23096"/>
</dbReference>
<dbReference type="KEGG" id="ath:AT2G23096"/>
<dbReference type="Araport" id="AT2G23096"/>
<dbReference type="TAIR" id="AT2G23096">
    <property type="gene designation" value="P4H13"/>
</dbReference>
<dbReference type="eggNOG" id="KOG1591">
    <property type="taxonomic scope" value="Eukaryota"/>
</dbReference>
<dbReference type="HOGENOM" id="CLU_058132_1_1_1"/>
<dbReference type="InParanoid" id="F4ILF8"/>
<dbReference type="OMA" id="EQYGPQK"/>
<dbReference type="PhylomeDB" id="F4ILF8"/>
<dbReference type="PRO" id="PR:F4ILF8"/>
<dbReference type="Proteomes" id="UP000006548">
    <property type="component" value="Chromosome 2"/>
</dbReference>
<dbReference type="ExpressionAtlas" id="F4ILF8">
    <property type="expression patterns" value="baseline and differential"/>
</dbReference>
<dbReference type="GO" id="GO:0005789">
    <property type="term" value="C:endoplasmic reticulum membrane"/>
    <property type="evidence" value="ECO:0007669"/>
    <property type="project" value="UniProtKB-SubCell"/>
</dbReference>
<dbReference type="GO" id="GO:0005506">
    <property type="term" value="F:iron ion binding"/>
    <property type="evidence" value="ECO:0007669"/>
    <property type="project" value="InterPro"/>
</dbReference>
<dbReference type="GO" id="GO:0031418">
    <property type="term" value="F:L-ascorbic acid binding"/>
    <property type="evidence" value="ECO:0007669"/>
    <property type="project" value="InterPro"/>
</dbReference>
<dbReference type="GO" id="GO:0004656">
    <property type="term" value="F:procollagen-proline 4-dioxygenase activity"/>
    <property type="evidence" value="ECO:0007669"/>
    <property type="project" value="UniProtKB-EC"/>
</dbReference>
<dbReference type="GO" id="GO:0080147">
    <property type="term" value="P:root hair cell development"/>
    <property type="evidence" value="ECO:0000315"/>
    <property type="project" value="TAIR"/>
</dbReference>
<dbReference type="FunFam" id="2.60.120.620:FF:000002">
    <property type="entry name" value="Prolyl 4-hydroxylase 4"/>
    <property type="match status" value="1"/>
</dbReference>
<dbReference type="Gene3D" id="2.60.120.620">
    <property type="entry name" value="q2cbj1_9rhob like domain"/>
    <property type="match status" value="1"/>
</dbReference>
<dbReference type="InterPro" id="IPR005123">
    <property type="entry name" value="Oxoglu/Fe-dep_dioxygenase_dom"/>
</dbReference>
<dbReference type="InterPro" id="IPR045054">
    <property type="entry name" value="P4HA-like"/>
</dbReference>
<dbReference type="InterPro" id="IPR006620">
    <property type="entry name" value="Pro_4_hyd_alph"/>
</dbReference>
<dbReference type="InterPro" id="IPR044862">
    <property type="entry name" value="Pro_4_hyd_alph_FE2OG_OXY"/>
</dbReference>
<dbReference type="PANTHER" id="PTHR10869">
    <property type="entry name" value="PROLYL 4-HYDROXYLASE ALPHA SUBUNIT"/>
    <property type="match status" value="1"/>
</dbReference>
<dbReference type="PANTHER" id="PTHR10869:SF246">
    <property type="entry name" value="TRANSMEMBRANE PROLYL 4-HYDROXYLASE"/>
    <property type="match status" value="1"/>
</dbReference>
<dbReference type="Pfam" id="PF13640">
    <property type="entry name" value="2OG-FeII_Oxy_3"/>
    <property type="match status" value="1"/>
</dbReference>
<dbReference type="SMART" id="SM00702">
    <property type="entry name" value="P4Hc"/>
    <property type="match status" value="1"/>
</dbReference>
<dbReference type="PROSITE" id="PS51471">
    <property type="entry name" value="FE2OG_OXY"/>
    <property type="match status" value="1"/>
</dbReference>
<organism>
    <name type="scientific">Arabidopsis thaliana</name>
    <name type="common">Mouse-ear cress</name>
    <dbReference type="NCBI Taxonomy" id="3702"/>
    <lineage>
        <taxon>Eukaryota</taxon>
        <taxon>Viridiplantae</taxon>
        <taxon>Streptophyta</taxon>
        <taxon>Embryophyta</taxon>
        <taxon>Tracheophyta</taxon>
        <taxon>Spermatophyta</taxon>
        <taxon>Magnoliopsida</taxon>
        <taxon>eudicotyledons</taxon>
        <taxon>Gunneridae</taxon>
        <taxon>Pentapetalae</taxon>
        <taxon>rosids</taxon>
        <taxon>malvids</taxon>
        <taxon>Brassicales</taxon>
        <taxon>Brassicaceae</taxon>
        <taxon>Camelineae</taxon>
        <taxon>Arabidopsis</taxon>
    </lineage>
</organism>
<keyword id="KW-0223">Dioxygenase</keyword>
<keyword id="KW-0256">Endoplasmic reticulum</keyword>
<keyword id="KW-0325">Glycoprotein</keyword>
<keyword id="KW-0408">Iron</keyword>
<keyword id="KW-0472">Membrane</keyword>
<keyword id="KW-0479">Metal-binding</keyword>
<keyword id="KW-0560">Oxidoreductase</keyword>
<keyword id="KW-1185">Reference proteome</keyword>
<keyword id="KW-0735">Signal-anchor</keyword>
<keyword id="KW-0812">Transmembrane</keyword>
<keyword id="KW-1133">Transmembrane helix</keyword>
<comment type="function">
    <text evidence="6">Catalyzes the post-translational formation of 4-hydroxyproline in -Xaa-Pro-Gly- sequences in proline-rich peptide sequences of plant glycoproteins and other proteins. Hydroxyprolines are important constituent of many plant cell wall glycoproteins such as extensins, hydroxyproline-rich glycoproteins, lectins and arabinogalactan proteins. Possesses high affinity for leucine-rich repeat and proline-rich extensins of root cell walls that are essential for root hair development. Hydroxyprolines define the subsequent O-glycosylation sites by arabinosyltransferases which elongate the O-arabinosides on extensins.</text>
</comment>
<comment type="catalytic activity">
    <reaction evidence="2">
        <text>L-prolyl-[collagen] + 2-oxoglutarate + O2 = trans-4-hydroxy-L-prolyl-[collagen] + succinate + CO2</text>
        <dbReference type="Rhea" id="RHEA:18945"/>
        <dbReference type="Rhea" id="RHEA-COMP:11676"/>
        <dbReference type="Rhea" id="RHEA-COMP:11680"/>
        <dbReference type="ChEBI" id="CHEBI:15379"/>
        <dbReference type="ChEBI" id="CHEBI:16526"/>
        <dbReference type="ChEBI" id="CHEBI:16810"/>
        <dbReference type="ChEBI" id="CHEBI:30031"/>
        <dbReference type="ChEBI" id="CHEBI:50342"/>
        <dbReference type="ChEBI" id="CHEBI:61965"/>
        <dbReference type="EC" id="1.14.11.2"/>
    </reaction>
</comment>
<comment type="cofactor">
    <cofactor evidence="5">
        <name>Fe(2+)</name>
        <dbReference type="ChEBI" id="CHEBI:29033"/>
    </cofactor>
    <text evidence="5">Binds 1 Fe(2+) ion per subunit.</text>
</comment>
<comment type="cofactor">
    <cofactor evidence="1">
        <name>L-ascorbate</name>
        <dbReference type="ChEBI" id="CHEBI:38290"/>
    </cofactor>
</comment>
<comment type="subcellular location">
    <subcellularLocation>
        <location evidence="9">Endoplasmic reticulum membrane</location>
        <topology evidence="9">Single-pass type II membrane protein</topology>
    </subcellularLocation>
</comment>
<comment type="tissue specificity">
    <text evidence="6">Expressed in epidermal root hair cells (trichoblasts) root hairless cells (atrichoblasts).</text>
</comment>
<comment type="disruption phenotype">
    <text evidence="6">Reduced root hair length and content of hydroxyproline in root cell walls.</text>
</comment>
<comment type="similarity">
    <text evidence="8">Belongs to the P4HA family.</text>
</comment>
<protein>
    <recommendedName>
        <fullName evidence="8">Prolyl 4-hydroxylase 13</fullName>
        <shortName evidence="7">AtP4H13</shortName>
        <ecNumber evidence="8">1.14.11.2</ecNumber>
    </recommendedName>
</protein>
<feature type="chain" id="PRO_0000429346" description="Prolyl 4-hydroxylase 13">
    <location>
        <begin position="1"/>
        <end position="274"/>
    </location>
</feature>
<feature type="topological domain" description="Cytoplasmic" evidence="8">
    <location>
        <begin position="1"/>
        <end position="10"/>
    </location>
</feature>
<feature type="transmembrane region" description="Helical; Signal-anchor for type II membrane protein" evidence="3">
    <location>
        <begin position="11"/>
        <end position="31"/>
    </location>
</feature>
<feature type="topological domain" description="Lumenal" evidence="8">
    <location>
        <begin position="32"/>
        <end position="274"/>
    </location>
</feature>
<feature type="domain" description="Fe2OG dioxygenase" evidence="5">
    <location>
        <begin position="151"/>
        <end position="270"/>
    </location>
</feature>
<feature type="binding site" evidence="5">
    <location>
        <position position="169"/>
    </location>
    <ligand>
        <name>Fe cation</name>
        <dbReference type="ChEBI" id="CHEBI:24875"/>
    </ligand>
</feature>
<feature type="binding site" evidence="5">
    <location>
        <position position="171"/>
    </location>
    <ligand>
        <name>Fe cation</name>
        <dbReference type="ChEBI" id="CHEBI:24875"/>
    </ligand>
</feature>
<feature type="binding site" evidence="5">
    <location>
        <position position="251"/>
    </location>
    <ligand>
        <name>Fe cation</name>
        <dbReference type="ChEBI" id="CHEBI:24875"/>
    </ligand>
</feature>
<feature type="binding site" evidence="5">
    <location>
        <position position="261"/>
    </location>
    <ligand>
        <name>2-oxoglutarate</name>
        <dbReference type="ChEBI" id="CHEBI:16810"/>
    </ligand>
</feature>
<feature type="glycosylation site" description="N-linked (GlcNAc...) asparagine" evidence="4">
    <location>
        <position position="242"/>
    </location>
</feature>
<proteinExistence type="evidence at transcript level"/>
<name>P4H13_ARATH</name>